<comment type="function">
    <text evidence="3 5">One gap junction consists of a cluster of closely packed pairs of transmembrane channels, the connexons, through which materials of low MW diffuse from one cell to a neighboring cell.</text>
</comment>
<comment type="subunit">
    <text evidence="3 5">A connexon is composed of a hexamer of connexins.</text>
</comment>
<comment type="subcellular location">
    <subcellularLocation>
        <location evidence="1">Cell membrane</location>
        <topology evidence="1">Multi-pass membrane protein</topology>
    </subcellularLocation>
    <subcellularLocation>
        <location evidence="1">Cell junction</location>
        <location evidence="1">Gap junction</location>
    </subcellularLocation>
</comment>
<comment type="tissue specificity">
    <text evidence="4">Exclusively expressed in the cochlea of the inner ear, where it is found in cells of the tegmentum vasculosum, cuboidal cells, supporting cells and clear cells.</text>
</comment>
<comment type="developmental stage">
    <text evidence="4">Specifically expressed at the late developmental stages in the cochlea.</text>
</comment>
<comment type="similarity">
    <text evidence="5">Belongs to the connexin family. Beta-type (group I) subfamily.</text>
</comment>
<dbReference type="EMBL" id="AF072699">
    <property type="protein sequence ID" value="AAC64043.1"/>
    <property type="molecule type" value="mRNA"/>
</dbReference>
<dbReference type="RefSeq" id="NP_001383864.1">
    <property type="nucleotide sequence ID" value="NM_001396935.1"/>
</dbReference>
<dbReference type="RefSeq" id="NP_001383865.1">
    <property type="nucleotide sequence ID" value="NM_001396936.1"/>
</dbReference>
<dbReference type="RefSeq" id="NP_001383866.1">
    <property type="nucleotide sequence ID" value="NM_001396937.1"/>
</dbReference>
<dbReference type="RefSeq" id="NP_001383867.1">
    <property type="nucleotide sequence ID" value="NM_001396938.1"/>
</dbReference>
<dbReference type="RefSeq" id="NP_990262.1">
    <property type="nucleotide sequence ID" value="NM_204931.2"/>
</dbReference>
<dbReference type="RefSeq" id="XP_015133175.1">
    <property type="nucleotide sequence ID" value="XM_015277689.1"/>
</dbReference>
<dbReference type="RefSeq" id="XP_015133180.1">
    <property type="nucleotide sequence ID" value="XM_015277694.1"/>
</dbReference>
<dbReference type="RefSeq" id="XP_015133186.1">
    <property type="nucleotide sequence ID" value="XM_015277700.1"/>
</dbReference>
<dbReference type="RefSeq" id="XP_046762675.1">
    <property type="nucleotide sequence ID" value="XM_046906719.1"/>
</dbReference>
<dbReference type="RefSeq" id="XP_046762676.1">
    <property type="nucleotide sequence ID" value="XM_046906720.1"/>
</dbReference>
<dbReference type="RefSeq" id="XP_046762677.1">
    <property type="nucleotide sequence ID" value="XM_046906721.1"/>
</dbReference>
<dbReference type="RefSeq" id="XP_046762678.1">
    <property type="nucleotide sequence ID" value="XM_046906722.1"/>
</dbReference>
<dbReference type="RefSeq" id="XP_046762680.1">
    <property type="nucleotide sequence ID" value="XM_046906724.1"/>
</dbReference>
<dbReference type="RefSeq" id="XP_046764720.1">
    <property type="nucleotide sequence ID" value="XM_046908764.1"/>
</dbReference>
<dbReference type="RefSeq" id="XP_046764734.1">
    <property type="nucleotide sequence ID" value="XM_046908778.1"/>
</dbReference>
<dbReference type="RefSeq" id="XP_046764759.1">
    <property type="nucleotide sequence ID" value="XM_046908803.1"/>
</dbReference>
<dbReference type="RefSeq" id="XP_046764768.1">
    <property type="nucleotide sequence ID" value="XM_046908812.1"/>
</dbReference>
<dbReference type="RefSeq" id="XP_046764793.1">
    <property type="nucleotide sequence ID" value="XM_046908837.1"/>
</dbReference>
<dbReference type="SMR" id="O93533"/>
<dbReference type="FunCoup" id="O93533">
    <property type="interactions" value="21"/>
</dbReference>
<dbReference type="STRING" id="9031.ENSGALP00000066131"/>
<dbReference type="PaxDb" id="9031-ENSGALP00000027628"/>
<dbReference type="Ensembl" id="ENSGALT00010013411.1">
    <property type="protein sequence ID" value="ENSGALP00010007950.1"/>
    <property type="gene ID" value="ENSGALG00010005609.1"/>
</dbReference>
<dbReference type="Ensembl" id="ENSGALT00010013413.1">
    <property type="protein sequence ID" value="ENSGALP00010007951.1"/>
    <property type="gene ID" value="ENSGALG00010005609.1"/>
</dbReference>
<dbReference type="Ensembl" id="ENSGALT00010013416.1">
    <property type="protein sequence ID" value="ENSGALP00010007952.1"/>
    <property type="gene ID" value="ENSGALG00010005609.1"/>
</dbReference>
<dbReference type="Ensembl" id="ENSGALT00010013418.1">
    <property type="protein sequence ID" value="ENSGALP00010007953.1"/>
    <property type="gene ID" value="ENSGALG00010005609.1"/>
</dbReference>
<dbReference type="Ensembl" id="ENSGALT00010013421.1">
    <property type="protein sequence ID" value="ENSGALP00010007954.1"/>
    <property type="gene ID" value="ENSGALG00010005609.1"/>
</dbReference>
<dbReference type="Ensembl" id="ENSGALT00010013423.1">
    <property type="protein sequence ID" value="ENSGALP00010007957.1"/>
    <property type="gene ID" value="ENSGALG00010005609.1"/>
</dbReference>
<dbReference type="Ensembl" id="ENSGALT00010013426.1">
    <property type="protein sequence ID" value="ENSGALP00010007959.1"/>
    <property type="gene ID" value="ENSGALG00010005609.1"/>
</dbReference>
<dbReference type="Ensembl" id="ENSGALT00010013429.1">
    <property type="protein sequence ID" value="ENSGALP00010007961.1"/>
    <property type="gene ID" value="ENSGALG00010005609.1"/>
</dbReference>
<dbReference type="Ensembl" id="ENSGALT00010013430.1">
    <property type="protein sequence ID" value="ENSGALP00010007962.1"/>
    <property type="gene ID" value="ENSGALG00010005609.1"/>
</dbReference>
<dbReference type="GeneID" id="395771"/>
<dbReference type="KEGG" id="gga:395771"/>
<dbReference type="CTD" id="10804"/>
<dbReference type="VEuPathDB" id="HostDB:geneid_395771"/>
<dbReference type="eggNOG" id="ENOG502QWM8">
    <property type="taxonomic scope" value="Eukaryota"/>
</dbReference>
<dbReference type="GeneTree" id="ENSGT01030000234513"/>
<dbReference type="HOGENOM" id="CLU_037388_4_1_1"/>
<dbReference type="InParanoid" id="O93533"/>
<dbReference type="OMA" id="RMVKCNA"/>
<dbReference type="OrthoDB" id="8934037at2759"/>
<dbReference type="PhylomeDB" id="O93533"/>
<dbReference type="TreeFam" id="TF329606"/>
<dbReference type="Reactome" id="R-GGA-190861">
    <property type="pathway name" value="Gap junction assembly"/>
</dbReference>
<dbReference type="Reactome" id="R-GGA-190872">
    <property type="pathway name" value="Transport of connexons to the plasma membrane"/>
</dbReference>
<dbReference type="PRO" id="PR:O93533"/>
<dbReference type="Proteomes" id="UP000000539">
    <property type="component" value="Chromosome 1"/>
</dbReference>
<dbReference type="Bgee" id="ENSGALG00000017136">
    <property type="expression patterns" value="Expressed in kidney and 10 other cell types or tissues"/>
</dbReference>
<dbReference type="GO" id="GO:0005922">
    <property type="term" value="C:connexin complex"/>
    <property type="evidence" value="ECO:0000318"/>
    <property type="project" value="GO_Central"/>
</dbReference>
<dbReference type="GO" id="GO:0005243">
    <property type="term" value="F:gap junction channel activity"/>
    <property type="evidence" value="ECO:0000318"/>
    <property type="project" value="GO_Central"/>
</dbReference>
<dbReference type="GO" id="GO:0007267">
    <property type="term" value="P:cell-cell signaling"/>
    <property type="evidence" value="ECO:0000318"/>
    <property type="project" value="GO_Central"/>
</dbReference>
<dbReference type="GO" id="GO:1990349">
    <property type="term" value="P:gap junction-mediated intercellular transport"/>
    <property type="evidence" value="ECO:0000318"/>
    <property type="project" value="GO_Central"/>
</dbReference>
<dbReference type="GO" id="GO:0007605">
    <property type="term" value="P:sensory perception of sound"/>
    <property type="evidence" value="ECO:0007669"/>
    <property type="project" value="UniProtKB-KW"/>
</dbReference>
<dbReference type="FunFam" id="1.20.1440.80:FF:000001">
    <property type="entry name" value="Gap junction alpha-1"/>
    <property type="match status" value="1"/>
</dbReference>
<dbReference type="Gene3D" id="1.20.1440.80">
    <property type="entry name" value="Gap junction channel protein cysteine-rich domain"/>
    <property type="match status" value="1"/>
</dbReference>
<dbReference type="InterPro" id="IPR000500">
    <property type="entry name" value="Connexin"/>
</dbReference>
<dbReference type="InterPro" id="IPR019570">
    <property type="entry name" value="Connexin_CCC"/>
</dbReference>
<dbReference type="InterPro" id="IPR017990">
    <property type="entry name" value="Connexin_CS"/>
</dbReference>
<dbReference type="InterPro" id="IPR013092">
    <property type="entry name" value="Connexin_N"/>
</dbReference>
<dbReference type="InterPro" id="IPR038359">
    <property type="entry name" value="Connexin_N_sf"/>
</dbReference>
<dbReference type="PANTHER" id="PTHR11984">
    <property type="entry name" value="CONNEXIN"/>
    <property type="match status" value="1"/>
</dbReference>
<dbReference type="PANTHER" id="PTHR11984:SF46">
    <property type="entry name" value="GAP JUNCTION BETA-2 PROTEIN"/>
    <property type="match status" value="1"/>
</dbReference>
<dbReference type="Pfam" id="PF00029">
    <property type="entry name" value="Connexin"/>
    <property type="match status" value="1"/>
</dbReference>
<dbReference type="PRINTS" id="PR00206">
    <property type="entry name" value="CONNEXIN"/>
</dbReference>
<dbReference type="SMART" id="SM00037">
    <property type="entry name" value="CNX"/>
    <property type="match status" value="1"/>
</dbReference>
<dbReference type="SMART" id="SM01089">
    <property type="entry name" value="Connexin_CCC"/>
    <property type="match status" value="1"/>
</dbReference>
<dbReference type="PROSITE" id="PS00407">
    <property type="entry name" value="CONNEXINS_1"/>
    <property type="match status" value="1"/>
</dbReference>
<dbReference type="PROSITE" id="PS00408">
    <property type="entry name" value="CONNEXINS_2"/>
    <property type="match status" value="1"/>
</dbReference>
<organism evidence="6">
    <name type="scientific">Gallus gallus</name>
    <name type="common">Chicken</name>
    <dbReference type="NCBI Taxonomy" id="9031"/>
    <lineage>
        <taxon>Eukaryota</taxon>
        <taxon>Metazoa</taxon>
        <taxon>Chordata</taxon>
        <taxon>Craniata</taxon>
        <taxon>Vertebrata</taxon>
        <taxon>Euteleostomi</taxon>
        <taxon>Archelosauria</taxon>
        <taxon>Archosauria</taxon>
        <taxon>Dinosauria</taxon>
        <taxon>Saurischia</taxon>
        <taxon>Theropoda</taxon>
        <taxon>Coelurosauria</taxon>
        <taxon>Aves</taxon>
        <taxon>Neognathae</taxon>
        <taxon>Galloanserae</taxon>
        <taxon>Galliformes</taxon>
        <taxon>Phasianidae</taxon>
        <taxon>Phasianinae</taxon>
        <taxon>Gallus</taxon>
    </lineage>
</organism>
<feature type="chain" id="PRO_0000057873" description="Gap junction beta-6 protein">
    <location>
        <begin position="1"/>
        <end position="263"/>
    </location>
</feature>
<feature type="topological domain" description="Cytoplasmic" evidence="2">
    <location>
        <begin position="1"/>
        <end position="19"/>
    </location>
</feature>
<feature type="transmembrane region" description="Helical" evidence="2">
    <location>
        <begin position="20"/>
        <end position="40"/>
    </location>
</feature>
<feature type="topological domain" description="Extracellular" evidence="2">
    <location>
        <begin position="41"/>
        <end position="75"/>
    </location>
</feature>
<feature type="transmembrane region" description="Helical" evidence="2">
    <location>
        <begin position="76"/>
        <end position="96"/>
    </location>
</feature>
<feature type="topological domain" description="Cytoplasmic" evidence="2">
    <location>
        <begin position="97"/>
        <end position="137"/>
    </location>
</feature>
<feature type="transmembrane region" description="Helical" evidence="2">
    <location>
        <begin position="138"/>
        <end position="158"/>
    </location>
</feature>
<feature type="topological domain" description="Extracellular" evidence="2">
    <location>
        <begin position="159"/>
        <end position="189"/>
    </location>
</feature>
<feature type="transmembrane region" description="Helical" evidence="2">
    <location>
        <begin position="190"/>
        <end position="210"/>
    </location>
</feature>
<feature type="topological domain" description="Cytoplasmic" evidence="2">
    <location>
        <begin position="211"/>
        <end position="263"/>
    </location>
</feature>
<protein>
    <recommendedName>
        <fullName>Gap junction beta-6 protein</fullName>
    </recommendedName>
    <alternativeName>
        <fullName>Connexin-31</fullName>
        <shortName>Cx31</shortName>
    </alternativeName>
</protein>
<proteinExistence type="evidence at transcript level"/>
<name>CXB6_CHICK</name>
<gene>
    <name type="primary">GJB6</name>
</gene>
<keyword id="KW-0965">Cell junction</keyword>
<keyword id="KW-1003">Cell membrane</keyword>
<keyword id="KW-0303">Gap junction</keyword>
<keyword id="KW-1009">Hearing</keyword>
<keyword id="KW-0472">Membrane</keyword>
<keyword id="KW-1185">Reference proteome</keyword>
<keyword id="KW-0812">Transmembrane</keyword>
<keyword id="KW-1133">Transmembrane helix</keyword>
<evidence type="ECO:0000250" key="1"/>
<evidence type="ECO:0000255" key="2"/>
<evidence type="ECO:0000255" key="3">
    <source>
        <dbReference type="RuleBase" id="RU000630"/>
    </source>
</evidence>
<evidence type="ECO:0000269" key="4">
    <source>
    </source>
</evidence>
<evidence type="ECO:0000305" key="5"/>
<evidence type="ECO:0000312" key="6">
    <source>
        <dbReference type="EMBL" id="AAC64043.1"/>
    </source>
</evidence>
<accession>O93533</accession>
<sequence length="263" mass="30923">MDWGALQTILGGVNKHSTSIGKIWLTVLFIFRIMILVVAAERVWGDEQDDFICNTLQPGCKNVCYDHFFPISHIRLWALQLIFVSTPALLVAMHVAYRRHEKKRQFRKGDQKCEYKDIEEIRTQRFRIEGTLWWTYTCSIFFRLVFEAVFMYAFYFMYDGFRMPRLMKCSAWPCPNTVDCFVSRPTEKTVFTIFMIAVSSICILLNVAELCYLLTKFFLRRSRKAGNQKHHPNHENKEETKQNEMNELISDSCQNTVIGFTSS</sequence>
<reference evidence="5" key="1">
    <citation type="journal article" date="1998" name="Proc. Natl. Acad. Sci. U.S.A.">
        <title>Molecular markers for cell types of the inner ear and candidate genes for hearing disorders.</title>
        <authorList>
            <person name="Heller S."/>
            <person name="Sheane C.A."/>
            <person name="Javed Z."/>
            <person name="Hudspeth A.J."/>
        </authorList>
    </citation>
    <scope>NUCLEOTIDE SEQUENCE [MRNA]</scope>
    <scope>TISSUE SPECIFICITY</scope>
    <scope>DEVELOPMENTAL STAGE</scope>
    <source>
        <strain>White leghorn</strain>
        <tissue>Basilar papilla</tissue>
    </source>
</reference>